<evidence type="ECO:0000250" key="1">
    <source>
        <dbReference type="UniProtKB" id="P35579"/>
    </source>
</evidence>
<evidence type="ECO:0000250" key="2">
    <source>
        <dbReference type="UniProtKB" id="P35580"/>
    </source>
</evidence>
<evidence type="ECO:0000250" key="3">
    <source>
        <dbReference type="UniProtKB" id="Q61879"/>
    </source>
</evidence>
<evidence type="ECO:0000250" key="4">
    <source>
        <dbReference type="UniProtKB" id="Q8VDD5"/>
    </source>
</evidence>
<evidence type="ECO:0000255" key="5"/>
<evidence type="ECO:0000255" key="6">
    <source>
        <dbReference type="PROSITE-ProRule" id="PRU00116"/>
    </source>
</evidence>
<evidence type="ECO:0000255" key="7">
    <source>
        <dbReference type="PROSITE-ProRule" id="PRU00782"/>
    </source>
</evidence>
<evidence type="ECO:0000255" key="8">
    <source>
        <dbReference type="PROSITE-ProRule" id="PRU01190"/>
    </source>
</evidence>
<evidence type="ECO:0000256" key="9">
    <source>
        <dbReference type="SAM" id="MobiDB-lite"/>
    </source>
</evidence>
<evidence type="ECO:0000269" key="10">
    <source>
    </source>
</evidence>
<evidence type="ECO:0000305" key="11"/>
<evidence type="ECO:0000305" key="12">
    <source>
    </source>
</evidence>
<evidence type="ECO:0000305" key="13">
    <source>
    </source>
</evidence>
<evidence type="ECO:0007744" key="14">
    <source>
    </source>
</evidence>
<protein>
    <recommendedName>
        <fullName>Myosin-9</fullName>
    </recommendedName>
    <alternativeName>
        <fullName>Cellular myosin heavy chain, type A</fullName>
    </alternativeName>
    <alternativeName>
        <fullName>Myosin heavy chain 9</fullName>
    </alternativeName>
    <alternativeName>
        <fullName>Myosin heavy chain, non-muscle IIa</fullName>
    </alternativeName>
    <alternativeName>
        <fullName>Non-muscle myosin heavy chain A</fullName>
        <shortName>NMMHC-A</shortName>
    </alternativeName>
    <alternativeName>
        <fullName>Non-muscle myosin heavy chain IIa</fullName>
        <shortName>NMMHC II-a</shortName>
        <shortName>NMMHC-IIA</shortName>
    </alternativeName>
</protein>
<organism>
    <name type="scientific">Rattus norvegicus</name>
    <name type="common">Rat</name>
    <dbReference type="NCBI Taxonomy" id="10116"/>
    <lineage>
        <taxon>Eukaryota</taxon>
        <taxon>Metazoa</taxon>
        <taxon>Chordata</taxon>
        <taxon>Craniata</taxon>
        <taxon>Vertebrata</taxon>
        <taxon>Euteleostomi</taxon>
        <taxon>Mammalia</taxon>
        <taxon>Eutheria</taxon>
        <taxon>Euarchontoglires</taxon>
        <taxon>Glires</taxon>
        <taxon>Rodentia</taxon>
        <taxon>Myomorpha</taxon>
        <taxon>Muroidea</taxon>
        <taxon>Muridae</taxon>
        <taxon>Murinae</taxon>
        <taxon>Rattus</taxon>
    </lineage>
</organism>
<dbReference type="EMBL" id="U31463">
    <property type="protein sequence ID" value="AAA74950.1"/>
    <property type="molecule type" value="mRNA"/>
</dbReference>
<dbReference type="SMR" id="Q62812"/>
<dbReference type="BioGRID" id="247773">
    <property type="interactions" value="10"/>
</dbReference>
<dbReference type="CORUM" id="Q62812"/>
<dbReference type="FunCoup" id="Q62812">
    <property type="interactions" value="1589"/>
</dbReference>
<dbReference type="IntAct" id="Q62812">
    <property type="interactions" value="5"/>
</dbReference>
<dbReference type="MINT" id="Q62812"/>
<dbReference type="STRING" id="10116.ENSRNOP00000007398"/>
<dbReference type="CarbonylDB" id="Q62812"/>
<dbReference type="GlyGen" id="Q62812">
    <property type="glycosylation" value="1 site, 1 O-linked glycan (1 site)"/>
</dbReference>
<dbReference type="iPTMnet" id="Q62812"/>
<dbReference type="PhosphoSitePlus" id="Q62812"/>
<dbReference type="SwissPalm" id="Q62812"/>
<dbReference type="jPOST" id="Q62812"/>
<dbReference type="PaxDb" id="10116-ENSRNOP00000007398"/>
<dbReference type="UCSC" id="RGD:3140">
    <property type="organism name" value="rat"/>
</dbReference>
<dbReference type="AGR" id="RGD:3140"/>
<dbReference type="RGD" id="3140">
    <property type="gene designation" value="Myh9"/>
</dbReference>
<dbReference type="eggNOG" id="KOG0161">
    <property type="taxonomic scope" value="Eukaryota"/>
</dbReference>
<dbReference type="InParanoid" id="Q62812"/>
<dbReference type="PhylomeDB" id="Q62812"/>
<dbReference type="Reactome" id="R-RNO-2029482">
    <property type="pathway name" value="Regulation of actin dynamics for phagocytic cup formation"/>
</dbReference>
<dbReference type="Reactome" id="R-RNO-5627123">
    <property type="pathway name" value="RHO GTPases activate PAKs"/>
</dbReference>
<dbReference type="PRO" id="PR:Q62812"/>
<dbReference type="Proteomes" id="UP000002494">
    <property type="component" value="Unplaced"/>
</dbReference>
<dbReference type="GO" id="GO:0015629">
    <property type="term" value="C:actin cytoskeleton"/>
    <property type="evidence" value="ECO:0000250"/>
    <property type="project" value="UniProtKB"/>
</dbReference>
<dbReference type="GO" id="GO:0005884">
    <property type="term" value="C:actin filament"/>
    <property type="evidence" value="ECO:0000314"/>
    <property type="project" value="RGD"/>
</dbReference>
<dbReference type="GO" id="GO:0042641">
    <property type="term" value="C:actomyosin"/>
    <property type="evidence" value="ECO:0000266"/>
    <property type="project" value="RGD"/>
</dbReference>
<dbReference type="GO" id="GO:0005826">
    <property type="term" value="C:actomyosin contractile ring"/>
    <property type="evidence" value="ECO:0000250"/>
    <property type="project" value="UniProtKB"/>
</dbReference>
<dbReference type="GO" id="GO:0005912">
    <property type="term" value="C:adherens junction"/>
    <property type="evidence" value="ECO:0000266"/>
    <property type="project" value="RGD"/>
</dbReference>
<dbReference type="GO" id="GO:0016324">
    <property type="term" value="C:apical plasma membrane"/>
    <property type="evidence" value="ECO:0000314"/>
    <property type="project" value="RGD"/>
</dbReference>
<dbReference type="GO" id="GO:0005903">
    <property type="term" value="C:brush border"/>
    <property type="evidence" value="ECO:0000314"/>
    <property type="project" value="RGD"/>
</dbReference>
<dbReference type="GO" id="GO:0005938">
    <property type="term" value="C:cell cortex"/>
    <property type="evidence" value="ECO:0000250"/>
    <property type="project" value="UniProtKB"/>
</dbReference>
<dbReference type="GO" id="GO:0031252">
    <property type="term" value="C:cell leading edge"/>
    <property type="evidence" value="ECO:0000250"/>
    <property type="project" value="UniProtKB"/>
</dbReference>
<dbReference type="GO" id="GO:0009986">
    <property type="term" value="C:cell surface"/>
    <property type="evidence" value="ECO:0000266"/>
    <property type="project" value="RGD"/>
</dbReference>
<dbReference type="GO" id="GO:0032154">
    <property type="term" value="C:cleavage furrow"/>
    <property type="evidence" value="ECO:0000250"/>
    <property type="project" value="UniProtKB"/>
</dbReference>
<dbReference type="GO" id="GO:0008180">
    <property type="term" value="C:COP9 signalosome"/>
    <property type="evidence" value="ECO:0000266"/>
    <property type="project" value="RGD"/>
</dbReference>
<dbReference type="GO" id="GO:0030863">
    <property type="term" value="C:cortical cytoskeleton"/>
    <property type="evidence" value="ECO:0000266"/>
    <property type="project" value="RGD"/>
</dbReference>
<dbReference type="GO" id="GO:0060473">
    <property type="term" value="C:cortical granule"/>
    <property type="evidence" value="ECO:0000250"/>
    <property type="project" value="UniProtKB"/>
</dbReference>
<dbReference type="GO" id="GO:0005737">
    <property type="term" value="C:cytoplasm"/>
    <property type="evidence" value="ECO:0000250"/>
    <property type="project" value="UniProtKB"/>
</dbReference>
<dbReference type="GO" id="GO:0009898">
    <property type="term" value="C:cytoplasmic side of plasma membrane"/>
    <property type="evidence" value="ECO:0000266"/>
    <property type="project" value="RGD"/>
</dbReference>
<dbReference type="GO" id="GO:0005829">
    <property type="term" value="C:cytosol"/>
    <property type="evidence" value="ECO:0000250"/>
    <property type="project" value="UniProtKB"/>
</dbReference>
<dbReference type="GO" id="GO:0005768">
    <property type="term" value="C:endosome"/>
    <property type="evidence" value="ECO:0000314"/>
    <property type="project" value="RGD"/>
</dbReference>
<dbReference type="GO" id="GO:0070382">
    <property type="term" value="C:exocytic vesicle"/>
    <property type="evidence" value="ECO:0000266"/>
    <property type="project" value="RGD"/>
</dbReference>
<dbReference type="GO" id="GO:0005925">
    <property type="term" value="C:focal adhesion"/>
    <property type="evidence" value="ECO:0000266"/>
    <property type="project" value="RGD"/>
</dbReference>
<dbReference type="GO" id="GO:0001772">
    <property type="term" value="C:immunological synapse"/>
    <property type="evidence" value="ECO:0000266"/>
    <property type="project" value="RGD"/>
</dbReference>
<dbReference type="GO" id="GO:0030027">
    <property type="term" value="C:lamellipodium"/>
    <property type="evidence" value="ECO:0000314"/>
    <property type="project" value="RGD"/>
</dbReference>
<dbReference type="GO" id="GO:0016328">
    <property type="term" value="C:lateral plasma membrane"/>
    <property type="evidence" value="ECO:0000314"/>
    <property type="project" value="RGD"/>
</dbReference>
<dbReference type="GO" id="GO:0016459">
    <property type="term" value="C:myosin complex"/>
    <property type="evidence" value="ECO:0000266"/>
    <property type="project" value="RGD"/>
</dbReference>
<dbReference type="GO" id="GO:0032982">
    <property type="term" value="C:myosin filament"/>
    <property type="evidence" value="ECO:0000318"/>
    <property type="project" value="GO_Central"/>
</dbReference>
<dbReference type="GO" id="GO:0016460">
    <property type="term" value="C:myosin II complex"/>
    <property type="evidence" value="ECO:0000266"/>
    <property type="project" value="RGD"/>
</dbReference>
<dbReference type="GO" id="GO:0097513">
    <property type="term" value="C:myosin II filament"/>
    <property type="evidence" value="ECO:0000266"/>
    <property type="project" value="RGD"/>
</dbReference>
<dbReference type="GO" id="GO:0031594">
    <property type="term" value="C:neuromuscular junction"/>
    <property type="evidence" value="ECO:0000266"/>
    <property type="project" value="RGD"/>
</dbReference>
<dbReference type="GO" id="GO:0005634">
    <property type="term" value="C:nucleus"/>
    <property type="evidence" value="ECO:0000250"/>
    <property type="project" value="UniProtKB"/>
</dbReference>
<dbReference type="GO" id="GO:0045335">
    <property type="term" value="C:phagocytic vesicle"/>
    <property type="evidence" value="ECO:0000314"/>
    <property type="project" value="RGD"/>
</dbReference>
<dbReference type="GO" id="GO:0005886">
    <property type="term" value="C:plasma membrane"/>
    <property type="evidence" value="ECO:0000250"/>
    <property type="project" value="UniProtKB"/>
</dbReference>
<dbReference type="GO" id="GO:0032991">
    <property type="term" value="C:protein-containing complex"/>
    <property type="evidence" value="ECO:0000314"/>
    <property type="project" value="RGD"/>
</dbReference>
<dbReference type="GO" id="GO:0001726">
    <property type="term" value="C:ruffle"/>
    <property type="evidence" value="ECO:0000250"/>
    <property type="project" value="UniProtKB"/>
</dbReference>
<dbReference type="GO" id="GO:0005819">
    <property type="term" value="C:spindle"/>
    <property type="evidence" value="ECO:0000266"/>
    <property type="project" value="RGD"/>
</dbReference>
<dbReference type="GO" id="GO:0001725">
    <property type="term" value="C:stress fiber"/>
    <property type="evidence" value="ECO:0000250"/>
    <property type="project" value="UniProtKB"/>
</dbReference>
<dbReference type="GO" id="GO:0001931">
    <property type="term" value="C:uropod"/>
    <property type="evidence" value="ECO:0000266"/>
    <property type="project" value="RGD"/>
</dbReference>
<dbReference type="GO" id="GO:0003779">
    <property type="term" value="F:actin binding"/>
    <property type="evidence" value="ECO:0000266"/>
    <property type="project" value="RGD"/>
</dbReference>
<dbReference type="GO" id="GO:0051015">
    <property type="term" value="F:actin filament binding"/>
    <property type="evidence" value="ECO:0000250"/>
    <property type="project" value="UniProtKB"/>
</dbReference>
<dbReference type="GO" id="GO:0043531">
    <property type="term" value="F:ADP binding"/>
    <property type="evidence" value="ECO:0000266"/>
    <property type="project" value="RGD"/>
</dbReference>
<dbReference type="GO" id="GO:0005524">
    <property type="term" value="F:ATP binding"/>
    <property type="evidence" value="ECO:0000266"/>
    <property type="project" value="RGD"/>
</dbReference>
<dbReference type="GO" id="GO:0005516">
    <property type="term" value="F:calmodulin binding"/>
    <property type="evidence" value="ECO:0007669"/>
    <property type="project" value="UniProtKB-KW"/>
</dbReference>
<dbReference type="GO" id="GO:0031762">
    <property type="term" value="F:follicle-stimulating hormone receptor binding"/>
    <property type="evidence" value="ECO:0000314"/>
    <property type="project" value="RGD"/>
</dbReference>
<dbReference type="GO" id="GO:0001965">
    <property type="term" value="F:G-protein alpha-subunit binding"/>
    <property type="evidence" value="ECO:0000314"/>
    <property type="project" value="RGD"/>
</dbReference>
<dbReference type="GO" id="GO:0042802">
    <property type="term" value="F:identical protein binding"/>
    <property type="evidence" value="ECO:0000314"/>
    <property type="project" value="RGD"/>
</dbReference>
<dbReference type="GO" id="GO:0005178">
    <property type="term" value="F:integrin binding"/>
    <property type="evidence" value="ECO:0000250"/>
    <property type="project" value="UniProtKB"/>
</dbReference>
<dbReference type="GO" id="GO:0000146">
    <property type="term" value="F:microfilament motor activity"/>
    <property type="evidence" value="ECO:0000250"/>
    <property type="project" value="UniProtKB"/>
</dbReference>
<dbReference type="GO" id="GO:0005391">
    <property type="term" value="F:P-type sodium:potassium-exchanging transporter activity"/>
    <property type="evidence" value="ECO:0000250"/>
    <property type="project" value="UniProtKB"/>
</dbReference>
<dbReference type="GO" id="GO:0019904">
    <property type="term" value="F:protein domain specific binding"/>
    <property type="evidence" value="ECO:0000266"/>
    <property type="project" value="RGD"/>
</dbReference>
<dbReference type="GO" id="GO:0042803">
    <property type="term" value="F:protein homodimerization activity"/>
    <property type="evidence" value="ECO:0000250"/>
    <property type="project" value="UniProtKB"/>
</dbReference>
<dbReference type="GO" id="GO:0019901">
    <property type="term" value="F:protein kinase binding"/>
    <property type="evidence" value="ECO:0000353"/>
    <property type="project" value="RGD"/>
</dbReference>
<dbReference type="GO" id="GO:0043495">
    <property type="term" value="F:protein-membrane adaptor activity"/>
    <property type="evidence" value="ECO:0000250"/>
    <property type="project" value="UniProtKB"/>
</dbReference>
<dbReference type="GO" id="GO:0097110">
    <property type="term" value="F:scaffold protein binding"/>
    <property type="evidence" value="ECO:0000314"/>
    <property type="project" value="RGD"/>
</dbReference>
<dbReference type="GO" id="GO:0001618">
    <property type="term" value="F:virus receptor activity"/>
    <property type="evidence" value="ECO:0000266"/>
    <property type="project" value="RGD"/>
</dbReference>
<dbReference type="GO" id="GO:0030036">
    <property type="term" value="P:actin cytoskeleton organization"/>
    <property type="evidence" value="ECO:0000250"/>
    <property type="project" value="UniProtKB"/>
</dbReference>
<dbReference type="GO" id="GO:0051017">
    <property type="term" value="P:actin filament bundle assembly"/>
    <property type="evidence" value="ECO:0000315"/>
    <property type="project" value="RGD"/>
</dbReference>
<dbReference type="GO" id="GO:0070650">
    <property type="term" value="P:actin filament bundle distribution"/>
    <property type="evidence" value="ECO:0000315"/>
    <property type="project" value="RGD"/>
</dbReference>
<dbReference type="GO" id="GO:0030048">
    <property type="term" value="P:actin filament-based movement"/>
    <property type="evidence" value="ECO:0000250"/>
    <property type="project" value="UniProtKB"/>
</dbReference>
<dbReference type="GO" id="GO:0031032">
    <property type="term" value="P:actomyosin structure organization"/>
    <property type="evidence" value="ECO:0000266"/>
    <property type="project" value="RGD"/>
</dbReference>
<dbReference type="GO" id="GO:0001525">
    <property type="term" value="P:angiogenesis"/>
    <property type="evidence" value="ECO:0000250"/>
    <property type="project" value="UniProtKB"/>
</dbReference>
<dbReference type="GO" id="GO:0043534">
    <property type="term" value="P:blood vessel endothelial cell migration"/>
    <property type="evidence" value="ECO:0000250"/>
    <property type="project" value="UniProtKB"/>
</dbReference>
<dbReference type="GO" id="GO:0007155">
    <property type="term" value="P:cell adhesion"/>
    <property type="evidence" value="ECO:0000266"/>
    <property type="project" value="RGD"/>
</dbReference>
<dbReference type="GO" id="GO:0000902">
    <property type="term" value="P:cell morphogenesis"/>
    <property type="evidence" value="ECO:0000266"/>
    <property type="project" value="RGD"/>
</dbReference>
<dbReference type="GO" id="GO:0048870">
    <property type="term" value="P:cell motility"/>
    <property type="evidence" value="ECO:0000266"/>
    <property type="project" value="RGD"/>
</dbReference>
<dbReference type="GO" id="GO:0098609">
    <property type="term" value="P:cell-cell adhesion"/>
    <property type="evidence" value="ECO:0000315"/>
    <property type="project" value="RGD"/>
</dbReference>
<dbReference type="GO" id="GO:0071260">
    <property type="term" value="P:cellular response to mechanical stimulus"/>
    <property type="evidence" value="ECO:0000270"/>
    <property type="project" value="RGD"/>
</dbReference>
<dbReference type="GO" id="GO:0036120">
    <property type="term" value="P:cellular response to platelet-derived growth factor stimulus"/>
    <property type="evidence" value="ECO:0000270"/>
    <property type="project" value="RGD"/>
</dbReference>
<dbReference type="GO" id="GO:0060471">
    <property type="term" value="P:cortical granule exocytosis"/>
    <property type="evidence" value="ECO:0000250"/>
    <property type="project" value="UniProtKB"/>
</dbReference>
<dbReference type="GO" id="GO:0032506">
    <property type="term" value="P:cytokinetic process"/>
    <property type="evidence" value="ECO:0000250"/>
    <property type="project" value="UniProtKB"/>
</dbReference>
<dbReference type="GO" id="GO:0035987">
    <property type="term" value="P:endodermal cell differentiation"/>
    <property type="evidence" value="ECO:0000266"/>
    <property type="project" value="RGD"/>
</dbReference>
<dbReference type="GO" id="GO:0051295">
    <property type="term" value="P:establishment of meiotic spindle localization"/>
    <property type="evidence" value="ECO:0000266"/>
    <property type="project" value="RGD"/>
</dbReference>
<dbReference type="GO" id="GO:0001768">
    <property type="term" value="P:establishment of T cell polarity"/>
    <property type="evidence" value="ECO:0000266"/>
    <property type="project" value="RGD"/>
</dbReference>
<dbReference type="GO" id="GO:0042699">
    <property type="term" value="P:follicle-stimulating hormone signaling pathway"/>
    <property type="evidence" value="ECO:0000315"/>
    <property type="project" value="RGD"/>
</dbReference>
<dbReference type="GO" id="GO:0001701">
    <property type="term" value="P:in utero embryonic development"/>
    <property type="evidence" value="ECO:0000266"/>
    <property type="project" value="RGD"/>
</dbReference>
<dbReference type="GO" id="GO:0032418">
    <property type="term" value="P:lysosome localization"/>
    <property type="evidence" value="ECO:0000266"/>
    <property type="project" value="RGD"/>
</dbReference>
<dbReference type="GO" id="GO:0000212">
    <property type="term" value="P:meiotic spindle organization"/>
    <property type="evidence" value="ECO:0000266"/>
    <property type="project" value="RGD"/>
</dbReference>
<dbReference type="GO" id="GO:0006509">
    <property type="term" value="P:membrane protein ectodomain proteolysis"/>
    <property type="evidence" value="ECO:0000250"/>
    <property type="project" value="UniProtKB"/>
</dbReference>
<dbReference type="GO" id="GO:0030224">
    <property type="term" value="P:monocyte differentiation"/>
    <property type="evidence" value="ECO:0000250"/>
    <property type="project" value="UniProtKB"/>
</dbReference>
<dbReference type="GO" id="GO:0007520">
    <property type="term" value="P:myoblast fusion"/>
    <property type="evidence" value="ECO:0000266"/>
    <property type="project" value="RGD"/>
</dbReference>
<dbReference type="GO" id="GO:1903919">
    <property type="term" value="P:negative regulation of actin filament severing"/>
    <property type="evidence" value="ECO:0000266"/>
    <property type="project" value="RGD"/>
</dbReference>
<dbReference type="GO" id="GO:1904753">
    <property type="term" value="P:negative regulation of vascular associated smooth muscle cell migration"/>
    <property type="evidence" value="ECO:0000315"/>
    <property type="project" value="RGD"/>
</dbReference>
<dbReference type="GO" id="GO:0006911">
    <property type="term" value="P:phagocytosis, engulfment"/>
    <property type="evidence" value="ECO:0000266"/>
    <property type="project" value="RGD"/>
</dbReference>
<dbReference type="GO" id="GO:0007200">
    <property type="term" value="P:phospholipase C-activating G protein-coupled receptor signaling pathway"/>
    <property type="evidence" value="ECO:0000315"/>
    <property type="project" value="RGD"/>
</dbReference>
<dbReference type="GO" id="GO:0001778">
    <property type="term" value="P:plasma membrane repair"/>
    <property type="evidence" value="ECO:0000266"/>
    <property type="project" value="RGD"/>
</dbReference>
<dbReference type="GO" id="GO:0030220">
    <property type="term" value="P:platelet formation"/>
    <property type="evidence" value="ECO:0000250"/>
    <property type="project" value="UniProtKB"/>
</dbReference>
<dbReference type="GO" id="GO:0045807">
    <property type="term" value="P:positive regulation of endocytosis"/>
    <property type="evidence" value="ECO:0000315"/>
    <property type="project" value="RGD"/>
</dbReference>
<dbReference type="GO" id="GO:0070374">
    <property type="term" value="P:positive regulation of ERK1 and ERK2 cascade"/>
    <property type="evidence" value="ECO:0000315"/>
    <property type="project" value="RGD"/>
</dbReference>
<dbReference type="GO" id="GO:0051894">
    <property type="term" value="P:positive regulation of focal adhesion assembly"/>
    <property type="evidence" value="ECO:0000315"/>
    <property type="project" value="RGD"/>
</dbReference>
<dbReference type="GO" id="GO:0045745">
    <property type="term" value="P:positive regulation of G protein-coupled receptor signaling pathway"/>
    <property type="evidence" value="ECO:0000315"/>
    <property type="project" value="RGD"/>
</dbReference>
<dbReference type="GO" id="GO:0032962">
    <property type="term" value="P:positive regulation of inositol trisphosphate biosynthetic process"/>
    <property type="evidence" value="ECO:0000315"/>
    <property type="project" value="RGD"/>
</dbReference>
<dbReference type="GO" id="GO:0035774">
    <property type="term" value="P:positive regulation of insulin secretion involved in cellular response to glucose stimulus"/>
    <property type="evidence" value="ECO:0000315"/>
    <property type="project" value="RGD"/>
</dbReference>
<dbReference type="GO" id="GO:0050766">
    <property type="term" value="P:positive regulation of phagocytosis"/>
    <property type="evidence" value="ECO:0000315"/>
    <property type="project" value="RGD"/>
</dbReference>
<dbReference type="GO" id="GO:1903923">
    <property type="term" value="P:positive regulation of protein processing in phagocytic vesicle"/>
    <property type="evidence" value="ECO:0000266"/>
    <property type="project" value="RGD"/>
</dbReference>
<dbReference type="GO" id="GO:0015031">
    <property type="term" value="P:protein transport"/>
    <property type="evidence" value="ECO:0000250"/>
    <property type="project" value="UniProtKB"/>
</dbReference>
<dbReference type="GO" id="GO:0045055">
    <property type="term" value="P:regulated exocytosis"/>
    <property type="evidence" value="ECO:0000266"/>
    <property type="project" value="RGD"/>
</dbReference>
<dbReference type="GO" id="GO:0110053">
    <property type="term" value="P:regulation of actin filament organization"/>
    <property type="evidence" value="ECO:0000315"/>
    <property type="project" value="RGD"/>
</dbReference>
<dbReference type="GO" id="GO:0008360">
    <property type="term" value="P:regulation of cell shape"/>
    <property type="evidence" value="ECO:0000250"/>
    <property type="project" value="UniProtKB"/>
</dbReference>
<dbReference type="GO" id="GO:1905684">
    <property type="term" value="P:regulation of plasma membrane repair"/>
    <property type="evidence" value="ECO:0000266"/>
    <property type="project" value="RGD"/>
</dbReference>
<dbReference type="GO" id="GO:0046718">
    <property type="term" value="P:symbiont entry into host cell"/>
    <property type="evidence" value="ECO:0000266"/>
    <property type="project" value="RGD"/>
</dbReference>
<dbReference type="GO" id="GO:0032796">
    <property type="term" value="P:uropod organization"/>
    <property type="evidence" value="ECO:0000266"/>
    <property type="project" value="RGD"/>
</dbReference>
<dbReference type="GO" id="GO:0006903">
    <property type="term" value="P:vesicle targeting"/>
    <property type="evidence" value="ECO:0000266"/>
    <property type="project" value="RGD"/>
</dbReference>
<dbReference type="FunFam" id="2.30.30.360:FF:000001">
    <property type="entry name" value="Myosin heavy chain"/>
    <property type="match status" value="1"/>
</dbReference>
<dbReference type="FunFam" id="3.30.70.1590:FF:000001">
    <property type="entry name" value="Myosin heavy chain"/>
    <property type="match status" value="1"/>
</dbReference>
<dbReference type="FunFam" id="1.10.10.820:FF:000002">
    <property type="entry name" value="Myosin heavy chain 10"/>
    <property type="match status" value="1"/>
</dbReference>
<dbReference type="FunFam" id="1.20.120.720:FF:000002">
    <property type="entry name" value="Myosin heavy chain 10"/>
    <property type="match status" value="1"/>
</dbReference>
<dbReference type="FunFam" id="1.20.5.4820:FF:000002">
    <property type="entry name" value="Myosin heavy chain 10"/>
    <property type="match status" value="1"/>
</dbReference>
<dbReference type="FunFam" id="1.20.58.530:FF:000003">
    <property type="entry name" value="Myosin heavy chain 10"/>
    <property type="match status" value="1"/>
</dbReference>
<dbReference type="FunFam" id="1.20.5.340:FF:000008">
    <property type="entry name" value="Myosin heavy chain 11"/>
    <property type="match status" value="1"/>
</dbReference>
<dbReference type="FunFam" id="3.40.850.10:FF:000175">
    <property type="entry name" value="Myosin heavy chain 9"/>
    <property type="match status" value="1"/>
</dbReference>
<dbReference type="FunFam" id="1.20.5.340:FF:000007">
    <property type="entry name" value="Myosin heavy chain, non-muscle"/>
    <property type="match status" value="1"/>
</dbReference>
<dbReference type="FunFam" id="4.10.270.10:FF:000001">
    <property type="entry name" value="Myosin heavy chain, non-muscle"/>
    <property type="match status" value="1"/>
</dbReference>
<dbReference type="FunFam" id="1.20.5.340:FF:000009">
    <property type="entry name" value="myosin-11 isoform X2"/>
    <property type="match status" value="1"/>
</dbReference>
<dbReference type="Gene3D" id="1.10.10.820">
    <property type="match status" value="1"/>
</dbReference>
<dbReference type="Gene3D" id="1.20.5.340">
    <property type="match status" value="6"/>
</dbReference>
<dbReference type="Gene3D" id="1.20.58.530">
    <property type="match status" value="1"/>
</dbReference>
<dbReference type="Gene3D" id="3.30.70.1590">
    <property type="match status" value="1"/>
</dbReference>
<dbReference type="Gene3D" id="6.10.250.2420">
    <property type="match status" value="1"/>
</dbReference>
<dbReference type="Gene3D" id="3.40.850.10">
    <property type="entry name" value="Kinesin motor domain"/>
    <property type="match status" value="1"/>
</dbReference>
<dbReference type="Gene3D" id="2.30.30.360">
    <property type="entry name" value="Myosin S1 fragment, N-terminal"/>
    <property type="match status" value="1"/>
</dbReference>
<dbReference type="Gene3D" id="1.20.120.720">
    <property type="entry name" value="Myosin VI head, motor domain, U50 subdomain"/>
    <property type="match status" value="1"/>
</dbReference>
<dbReference type="Gene3D" id="4.10.270.10">
    <property type="entry name" value="Myosin, subunit A"/>
    <property type="match status" value="1"/>
</dbReference>
<dbReference type="InterPro" id="IPR000048">
    <property type="entry name" value="IQ_motif_EF-hand-BS"/>
</dbReference>
<dbReference type="InterPro" id="IPR036961">
    <property type="entry name" value="Kinesin_motor_dom_sf"/>
</dbReference>
<dbReference type="InterPro" id="IPR001609">
    <property type="entry name" value="Myosin_head_motor_dom-like"/>
</dbReference>
<dbReference type="InterPro" id="IPR004009">
    <property type="entry name" value="Myosin_N"/>
</dbReference>
<dbReference type="InterPro" id="IPR008989">
    <property type="entry name" value="Myosin_S1_N"/>
</dbReference>
<dbReference type="InterPro" id="IPR002928">
    <property type="entry name" value="Myosin_tail"/>
</dbReference>
<dbReference type="InterPro" id="IPR027417">
    <property type="entry name" value="P-loop_NTPase"/>
</dbReference>
<dbReference type="PANTHER" id="PTHR45615">
    <property type="entry name" value="MYOSIN HEAVY CHAIN, NON-MUSCLE"/>
    <property type="match status" value="1"/>
</dbReference>
<dbReference type="PANTHER" id="PTHR45615:SF16">
    <property type="entry name" value="MYOSIN-9"/>
    <property type="match status" value="1"/>
</dbReference>
<dbReference type="Pfam" id="PF00063">
    <property type="entry name" value="Myosin_head"/>
    <property type="match status" value="1"/>
</dbReference>
<dbReference type="Pfam" id="PF02736">
    <property type="entry name" value="Myosin_N"/>
    <property type="match status" value="1"/>
</dbReference>
<dbReference type="Pfam" id="PF01576">
    <property type="entry name" value="Myosin_tail_1"/>
    <property type="match status" value="1"/>
</dbReference>
<dbReference type="PRINTS" id="PR00193">
    <property type="entry name" value="MYOSINHEAVY"/>
</dbReference>
<dbReference type="SMART" id="SM00015">
    <property type="entry name" value="IQ"/>
    <property type="match status" value="1"/>
</dbReference>
<dbReference type="SMART" id="SM00242">
    <property type="entry name" value="MYSc"/>
    <property type="match status" value="1"/>
</dbReference>
<dbReference type="SUPFAM" id="SSF90257">
    <property type="entry name" value="Myosin rod fragments"/>
    <property type="match status" value="6"/>
</dbReference>
<dbReference type="SUPFAM" id="SSF52540">
    <property type="entry name" value="P-loop containing nucleoside triphosphate hydrolases"/>
    <property type="match status" value="1"/>
</dbReference>
<dbReference type="SUPFAM" id="SSF57997">
    <property type="entry name" value="Tropomyosin"/>
    <property type="match status" value="1"/>
</dbReference>
<dbReference type="PROSITE" id="PS50096">
    <property type="entry name" value="IQ"/>
    <property type="match status" value="1"/>
</dbReference>
<dbReference type="PROSITE" id="PS51456">
    <property type="entry name" value="MYOSIN_MOTOR"/>
    <property type="match status" value="1"/>
</dbReference>
<dbReference type="PROSITE" id="PS51844">
    <property type="entry name" value="SH3_LIKE"/>
    <property type="match status" value="1"/>
</dbReference>
<accession>Q62812</accession>
<name>MYH9_RAT</name>
<gene>
    <name type="primary">Myh9</name>
</gene>
<feature type="initiator methionine" description="Removed" evidence="1">
    <location>
        <position position="1"/>
    </location>
</feature>
<feature type="chain" id="PRO_0000123418" description="Myosin-9">
    <location>
        <begin position="2"/>
        <end position="1961"/>
    </location>
</feature>
<feature type="domain" description="Myosin N-terminal SH3-like" evidence="8">
    <location>
        <begin position="27"/>
        <end position="77"/>
    </location>
</feature>
<feature type="domain" description="Myosin motor" evidence="7">
    <location>
        <begin position="81"/>
        <end position="776"/>
    </location>
</feature>
<feature type="domain" description="IQ" evidence="6">
    <location>
        <begin position="779"/>
        <end position="808"/>
    </location>
</feature>
<feature type="region of interest" description="Mediates interaction with LIMCH1" evidence="1">
    <location>
        <begin position="2"/>
        <end position="838"/>
    </location>
</feature>
<feature type="region of interest" description="Actin-binding">
    <location>
        <begin position="654"/>
        <end position="676"/>
    </location>
</feature>
<feature type="region of interest" description="Disordered" evidence="9">
    <location>
        <begin position="1035"/>
        <end position="1057"/>
    </location>
</feature>
<feature type="region of interest" description="Disordered" evidence="9">
    <location>
        <begin position="1331"/>
        <end position="1353"/>
    </location>
</feature>
<feature type="region of interest" description="Disordered" evidence="9">
    <location>
        <begin position="1878"/>
        <end position="1910"/>
    </location>
</feature>
<feature type="region of interest" description="Disordered" evidence="9">
    <location>
        <begin position="1938"/>
        <end position="1961"/>
    </location>
</feature>
<feature type="coiled-coil region" evidence="5">
    <location>
        <begin position="841"/>
        <end position="1927"/>
    </location>
</feature>
<feature type="compositionally biased region" description="Basic and acidic residues" evidence="9">
    <location>
        <begin position="1035"/>
        <end position="1055"/>
    </location>
</feature>
<feature type="compositionally biased region" description="Basic and acidic residues" evidence="9">
    <location>
        <begin position="1332"/>
        <end position="1344"/>
    </location>
</feature>
<feature type="compositionally biased region" description="Basic and acidic residues" evidence="9">
    <location>
        <begin position="1949"/>
        <end position="1961"/>
    </location>
</feature>
<feature type="binding site" evidence="5">
    <location>
        <begin position="174"/>
        <end position="181"/>
    </location>
    <ligand>
        <name>ATP</name>
        <dbReference type="ChEBI" id="CHEBI:30616"/>
    </ligand>
</feature>
<feature type="modified residue" description="N-acetylalanine" evidence="1">
    <location>
        <position position="2"/>
    </location>
</feature>
<feature type="modified residue" description="N6-acetyllysine" evidence="1">
    <location>
        <position position="8"/>
    </location>
</feature>
<feature type="modified residue" description="Phosphotyrosine" evidence="1">
    <location>
        <position position="11"/>
    </location>
</feature>
<feature type="modified residue" description="N6-acetyllysine" evidence="1">
    <location>
        <position position="102"/>
    </location>
</feature>
<feature type="modified residue" description="N6-acetyllysine" evidence="1">
    <location>
        <position position="299"/>
    </location>
</feature>
<feature type="modified residue" description="N6-acetyllysine" evidence="2">
    <location>
        <position position="435"/>
    </location>
</feature>
<feature type="modified residue" description="N6-acetyllysine" evidence="4">
    <location>
        <position position="613"/>
    </location>
</feature>
<feature type="modified residue" description="Phosphoserine" evidence="1">
    <location>
        <position position="628"/>
    </location>
</feature>
<feature type="modified residue" description="Phosphotyrosine" evidence="14">
    <location>
        <position position="754"/>
    </location>
</feature>
<feature type="modified residue" description="N6-succinyllysine" evidence="4">
    <location>
        <position position="850"/>
    </location>
</feature>
<feature type="modified residue" description="N6-acetyllysine" evidence="4">
    <location>
        <position position="860"/>
    </location>
</feature>
<feature type="modified residue" description="N6-acetyllysine" evidence="4">
    <location>
        <position position="975"/>
    </location>
</feature>
<feature type="modified residue" description="N6-acetyllysine" evidence="1">
    <location>
        <position position="1024"/>
    </location>
</feature>
<feature type="modified residue" description="Phosphoserine" evidence="14">
    <location>
        <position position="1114"/>
    </location>
</feature>
<feature type="modified residue" description="N6-acetyllysine" evidence="3">
    <location>
        <position position="1234"/>
    </location>
</feature>
<feature type="modified residue" description="N6-acetyllysine" evidence="4">
    <location>
        <position position="1249"/>
    </location>
</feature>
<feature type="modified residue" description="N6-acetyllysine" evidence="1">
    <location>
        <position position="1358"/>
    </location>
</feature>
<feature type="modified residue" description="N6-acetyllysine" evidence="1">
    <location>
        <position position="1393"/>
    </location>
</feature>
<feature type="modified residue" description="N6-acetyllysine" evidence="1">
    <location>
        <position position="1405"/>
    </location>
</feature>
<feature type="modified residue" description="N6-acetyllysine" evidence="1">
    <location>
        <position position="1411"/>
    </location>
</feature>
<feature type="modified residue" description="N6-acetyllysine" evidence="1">
    <location>
        <position position="1460"/>
    </location>
</feature>
<feature type="modified residue" description="N6-acetyllysine" evidence="1">
    <location>
        <position position="1639"/>
    </location>
</feature>
<feature type="modified residue" description="N6-succinyllysine" evidence="4">
    <location>
        <position position="1670"/>
    </location>
</feature>
<feature type="modified residue" description="Phosphoserine" evidence="14">
    <location>
        <position position="1715"/>
    </location>
</feature>
<feature type="modified residue" description="N6-acetyllysine" evidence="4">
    <location>
        <position position="1794"/>
    </location>
</feature>
<feature type="modified residue" description="N6-acetyllysine" evidence="4">
    <location>
        <position position="1803"/>
    </location>
</feature>
<feature type="modified residue" description="N6-acetyllysine" evidence="4">
    <location>
        <position position="1846"/>
    </location>
</feature>
<feature type="modified residue" description="Omega-N-methylarginine" evidence="3">
    <location>
        <position position="1924"/>
    </location>
</feature>
<feature type="modified residue" description="Phosphoserine" evidence="14">
    <location>
        <position position="1944"/>
    </location>
</feature>
<keyword id="KW-0007">Acetylation</keyword>
<keyword id="KW-0009">Actin-binding</keyword>
<keyword id="KW-0067">ATP-binding</keyword>
<keyword id="KW-0112">Calmodulin-binding</keyword>
<keyword id="KW-0130">Cell adhesion</keyword>
<keyword id="KW-0133">Cell shape</keyword>
<keyword id="KW-0175">Coiled coil</keyword>
<keyword id="KW-0963">Cytoplasm</keyword>
<keyword id="KW-0968">Cytoplasmic vesicle</keyword>
<keyword id="KW-0206">Cytoskeleton</keyword>
<keyword id="KW-0903">Direct protein sequencing</keyword>
<keyword id="KW-0488">Methylation</keyword>
<keyword id="KW-0505">Motor protein</keyword>
<keyword id="KW-0518">Myosin</keyword>
<keyword id="KW-0547">Nucleotide-binding</keyword>
<keyword id="KW-0597">Phosphoprotein</keyword>
<keyword id="KW-1185">Reference proteome</keyword>
<keyword id="KW-0832">Ubl conjugation</keyword>
<reference key="1">
    <citation type="journal article" date="1996" name="J. Muscle Res. Cell Motil.">
        <title>Cloning of the cDNA encoding rat myosin heavy chain-A and evidence for the absence of myosin heavy chain-B in cultured rat mast (RBL-2H3) cells.</title>
        <authorList>
            <person name="Choi O.H."/>
            <person name="Park C."/>
            <person name="Itoh K."/>
            <person name="Adelstein R.S."/>
            <person name="Beaven M.A."/>
        </authorList>
    </citation>
    <scope>NUCLEOTIDE SEQUENCE [MRNA]</scope>
</reference>
<reference key="2">
    <citation type="submission" date="2007-09" db="UniProtKB">
        <authorList>
            <person name="Lubec G."/>
            <person name="Kang S.U."/>
            <person name="Lubec S."/>
        </authorList>
    </citation>
    <scope>PROTEIN SEQUENCE OF 181-199; 546-555; 618-639; 1241-1248; 1402-1411; 1446-1455; 1474-1478; 1557-1567; 1605-1614; 1793-1803 AND 1925-1934</scope>
    <scope>IDENTIFICATION BY MASS SPECTROMETRY</scope>
    <source>
        <strain>Sprague-Dawley</strain>
        <tissue>Brain</tissue>
    </source>
</reference>
<reference key="3">
    <citation type="journal article" date="2003" name="J. Biol. Chem.">
        <title>Glycosyl modification facilitates homo- and hetero-oligomerization of the serotonin transporter. A specific role for sialic acid residues.</title>
        <authorList>
            <person name="Ozaslan D."/>
            <person name="Wang S."/>
            <person name="Ahmed B.A."/>
            <person name="Kocabas A.M."/>
            <person name="McCastlain J.C."/>
            <person name="Bene A."/>
            <person name="Kilic F."/>
        </authorList>
    </citation>
    <scope>RETRACTED PAPER</scope>
</reference>
<reference key="4">
    <citation type="journal article" date="2019" name="J. Biol. Chem.">
        <title>Withdrawal: Glycosyl modification facilitates homo- and hetero-oligomerization of the serotonin transporter: a specific role for sialic acid residues.</title>
        <authorList>
            <person name="Ozaslan D."/>
            <person name="Wang S."/>
            <person name="Ahmed B.A."/>
            <person name="Kocabas A.M."/>
            <person name="McCastlain J.C."/>
            <person name="Bene A."/>
            <person name="Kilic F."/>
        </authorList>
    </citation>
    <scope>RETRACTION NOTICE OF PUBMED:12944413</scope>
</reference>
<reference key="5">
    <citation type="journal article" date="2004" name="Invest. Ophthalmol. Vis. Sci.">
        <title>Pdlim2, a novel PDZ-LIM domain protein, interacts with alpha-actinins and filamin A.</title>
        <authorList>
            <person name="Torrado M."/>
            <person name="Senatorov V.V."/>
            <person name="Trivedi R."/>
            <person name="Fariss R.N."/>
            <person name="Tomarev S.I."/>
        </authorList>
    </citation>
    <scope>INTERACTION WITH PDLIM2</scope>
</reference>
<reference key="6">
    <citation type="journal article" date="2012" name="Nat. Commun.">
        <title>Quantitative maps of protein phosphorylation sites across 14 different rat organs and tissues.</title>
        <authorList>
            <person name="Lundby A."/>
            <person name="Secher A."/>
            <person name="Lage K."/>
            <person name="Nordsborg N.B."/>
            <person name="Dmytriyev A."/>
            <person name="Lundby C."/>
            <person name="Olsen J.V."/>
        </authorList>
    </citation>
    <scope>PHOSPHORYLATION [LARGE SCALE ANALYSIS] AT TYR-754; SER-1114; SER-1715 AND SER-1944</scope>
    <scope>IDENTIFICATION BY MASS SPECTROMETRY [LARGE SCALE ANALYSIS]</scope>
</reference>
<proteinExistence type="evidence at protein level"/>
<sequence>MAQQAADKYLYVDKNFINNPLAQADCGAKKLVWVPSTKNGFEPASLKEEVGEEAIVELVENGKKVKVNKDDIQKMNPPKFSKVEDMAELTCLNEASVLHNLKERYYSGLIYTYSGLFCVVINPYKNLPIYSEEIVDMYKGKKRHEMPPHIYAITDTAYRSMMQDREDQSILCTGESGAGKTENTKKVIQYLAHVASSHKSKKDQGELERQLLQANPILEAFGNAKTVKNDNSSRFGKFIRINFDVNGYIVGANIETYLLEKSRAIRQAKEERTFHIFYYLLSGAGEHLKTDLLLEPYNKYRFLSNGHVTIPGQQDKDMFQETMEAMRIMGIPEDEQMGLLRVISGVLQLGNIVFKKERNTDQASMPDNTAAQKVSHLLGINVTDFTRGILTPRIKVGRDYVQKAQTKEQADFAIEALAKATYERMFRWLVLRINKALDKTKRQGASFIGILDIAGFEIFDLNSFEQLCINYTNEKLQQLFNHTMFILEQEEYQREGIEWNFIDFGLDLQPCIDLIEKPAGPPGILALLDEECWFPKATDKSFVEKVVQEQGTHPKFQKPKQLKDKADFCIIHYAGKVDYKADEWLMKNMDPLNDNIATLLHQSSDKFVSELWKDVDRIIGLDQVAGMSETALPGAFKTRKGMFRTVGQLYKEQLAKLMATLRNTNPNFVCCIIPNHEKKAGKLDPHLVLDQLRCNGVLEGIRICRQGFPNRVVFQEFRQRYEILTPNSIPKGFMDGKQACVLMIKALELDSNLYRIGQSKVFFRSGVLAHLEEERDLKITDVIIGFQACCRGYLARKAFAKRQQQLTAMKVLQRNCAAYLRLRNWQWWRLFTKVKPLLNSIRHEDELLAKEAELTKVREKHLAAENRLTEMETMQSQLMAEKLQLQEQLQAKTELCAEAEELRARLTAKKQELEEICHDLEARVEEEEERCQYLQAEKKKMQQNIQELEEQLEEEESARQKLQLEKVTTEAKLKKLEEDQIIMEDQNCKLAKEKKLLEDRVAEFTTDLMEEEEKSKSLAKLKNKHEAMITDLEERLRREEKQRQELEKTRRKLEGDSTDLSDQIAELQAQIAELKMQLAKKEEELQAALARVEEEAAQKNMALKKIRELETQISELQEDLESERACRNKAEKQKRDLGEELEALKTELEDTLDSTAAQQELRSKREQEVSILKKTLEDEAKTHEAQIQEMRQKHSQAVEELAEQLEQTKRVKATLEKAKQTLENERGELANEVKALLQGKGDSEHKRKKVEAQLQELQVKFSEGERVRTELADKVSKLQVELDSVTGLLNQSDSKSSKLTKDFSALESQLQDTQELLQEENRQKLSLSTKLKQMEDEKNSFREQLEEEEEEAKRNLEKQIATLHAQVTDMKKKMEDGVGCLETAEEAKRRLQKDLEGLSQRLEEKVAAYDKLEKTKTRLQQELDDLLVDLDHQRQSVSNLEKKQKKFDQLLAEEKTISAKYAEERDRAEAEAREKETKALSLARALEEAMEQKAELERLNKQFRTEMEDLMSSKDDVGKSVHELEKSNRALEQQVEEMKTQLEELEDELQATEDAKLRLEVNLQAMKAQFERDLQGRDEQSEEKKKQLVRQVREMEAELEDERKQRSIAMAARKKLEMDLKDLEAHIDTANKNREEAIKQLRKLQAQMKDCMRDVDDTRASREEILAQAKENEKKLKSMEAEMIQLQEELAAAERAKRQAQQERDELADEIANSSGKGALALEEKRRLEALIALLEEELEEEQGNTELINDRLKKANLQIDQINTDLNLERSHAQKNENARQQLERQNKELKAKLQEMESAVKSKYKASIAALEAKIAQLEEQLDNETKERQAASKQVRRAEKKLKDVLLQVEDERRNAEQFKDQADKASTRLKQLKRQLEEAEEEAQRANASRRKLQRELEDATETADAMNREVSSLKNKLRRGDMPFVVTRRIVRKGTGDCSDEEVDGKADGADAKATE</sequence>
<comment type="function">
    <text evidence="1 4">Cellular myosin that appears to play a role in cytokinesis, cell shape, and specialized functions such as secretion and capping (By similarity). Required for cortical actin clearance prior to oocyte exocytosis (By similarity). Promotes cell motility in conjunction with S100A4 (By similarity). During cell spreading, plays an important role in cytoskeleton reorganization, focal contact formation (in the margins but not the central part of spreading cells), and lamellipodial retraction; this function is mechanically antagonized by MYH10 (By similarity).</text>
</comment>
<comment type="subunit">
    <text evidence="1 4 10">Myosin is a hexameric protein that consists of 2 heavy chain subunits (MHC), 2 alkali light chain subunits (MLC) and 2 regulatory light chain subunits (MLC-2). Interacts with RASIP1 (By similarity). Interacts with DDR1 (By similarity). Interacts with PDLIM2 (PubMed:15505042). Interacts with SVIL (By similarity). Interacts with HTRA3 (By similarity). Interacts with Myo7a (By similarity). Interacts with CFAP95 (By similarity). Interacts with LIMCH1; independently of the integration of MYH9 into the myosin complex (By similarity). Interacts with RAB3A (By similarity). Interacts with ZBED4 (By similarity). Interacts with S100A4; this interaction increases cell motility (By similarity).</text>
</comment>
<comment type="subcellular location">
    <subcellularLocation>
        <location evidence="4">Cytoplasm</location>
        <location evidence="4">Cytoskeleton</location>
    </subcellularLocation>
    <subcellularLocation>
        <location evidence="4">Cytoplasm</location>
        <location evidence="4">Cell cortex</location>
    </subcellularLocation>
    <subcellularLocation>
        <location evidence="4">Cytoplasmic vesicle</location>
        <location evidence="4">Secretory vesicle</location>
        <location evidence="4">Cortical granule</location>
    </subcellularLocation>
    <text evidence="1">Colocalizes with actin filaments at lamellipodia margins and at the leading edge of migrating cells (By similarity). In retinal pigment epithelial cells, predominantly localized to stress fiber-like structures with some localization to cytoplasmic puncta (By similarity).</text>
</comment>
<comment type="domain">
    <text>The rodlike tail sequence is highly repetitive, showing cycles of a 28-residue repeat pattern composed of 4 heptapeptides, characteristic for alpha-helical coiled coils.</text>
</comment>
<comment type="PTM">
    <text evidence="1 4">ISGylated.</text>
</comment>
<comment type="PTM">
    <text evidence="1 4">Ubiquitination.</text>
</comment>
<comment type="similarity">
    <text evidence="11">Belongs to the TRAFAC class myosin-kinesin ATPase superfamily. Myosin family.</text>
</comment>
<comment type="caution">
    <text evidence="12 13">Reported to interact with SLC6A4 in its sialylated form. However, this publication was retracted due to image duplication in the figures.</text>
</comment>